<accession>A9L985</accession>
<dbReference type="EMBL" id="DQ400350">
    <property type="protein sequence ID" value="ABD48484.1"/>
    <property type="molecule type" value="Genomic_DNA"/>
</dbReference>
<dbReference type="RefSeq" id="YP_001595497.1">
    <property type="nucleotide sequence ID" value="NC_010109.1"/>
</dbReference>
<dbReference type="SMR" id="A9L985"/>
<dbReference type="GeneID" id="5787512"/>
<dbReference type="GO" id="GO:0009507">
    <property type="term" value="C:chloroplast"/>
    <property type="evidence" value="ECO:0007669"/>
    <property type="project" value="UniProtKB-SubCell"/>
</dbReference>
<dbReference type="GO" id="GO:0005763">
    <property type="term" value="C:mitochondrial small ribosomal subunit"/>
    <property type="evidence" value="ECO:0007669"/>
    <property type="project" value="TreeGrafter"/>
</dbReference>
<dbReference type="GO" id="GO:0003735">
    <property type="term" value="F:structural constituent of ribosome"/>
    <property type="evidence" value="ECO:0007669"/>
    <property type="project" value="InterPro"/>
</dbReference>
<dbReference type="GO" id="GO:0006412">
    <property type="term" value="P:translation"/>
    <property type="evidence" value="ECO:0007669"/>
    <property type="project" value="UniProtKB-UniRule"/>
</dbReference>
<dbReference type="CDD" id="cd01425">
    <property type="entry name" value="RPS2"/>
    <property type="match status" value="1"/>
</dbReference>
<dbReference type="FunFam" id="1.10.287.610:FF:000001">
    <property type="entry name" value="30S ribosomal protein S2"/>
    <property type="match status" value="1"/>
</dbReference>
<dbReference type="Gene3D" id="3.40.50.10490">
    <property type="entry name" value="Glucose-6-phosphate isomerase like protein, domain 1"/>
    <property type="match status" value="1"/>
</dbReference>
<dbReference type="Gene3D" id="1.10.287.610">
    <property type="entry name" value="Helix hairpin bin"/>
    <property type="match status" value="1"/>
</dbReference>
<dbReference type="HAMAP" id="MF_00291_B">
    <property type="entry name" value="Ribosomal_uS2_B"/>
    <property type="match status" value="1"/>
</dbReference>
<dbReference type="InterPro" id="IPR001865">
    <property type="entry name" value="Ribosomal_uS2"/>
</dbReference>
<dbReference type="InterPro" id="IPR005706">
    <property type="entry name" value="Ribosomal_uS2_bac/mit/plastid"/>
</dbReference>
<dbReference type="InterPro" id="IPR018130">
    <property type="entry name" value="Ribosomal_uS2_CS"/>
</dbReference>
<dbReference type="InterPro" id="IPR023591">
    <property type="entry name" value="Ribosomal_uS2_flav_dom_sf"/>
</dbReference>
<dbReference type="NCBIfam" id="TIGR01011">
    <property type="entry name" value="rpsB_bact"/>
    <property type="match status" value="1"/>
</dbReference>
<dbReference type="PANTHER" id="PTHR12534">
    <property type="entry name" value="30S RIBOSOMAL PROTEIN S2 PROKARYOTIC AND ORGANELLAR"/>
    <property type="match status" value="1"/>
</dbReference>
<dbReference type="PANTHER" id="PTHR12534:SF0">
    <property type="entry name" value="SMALL RIBOSOMAL SUBUNIT PROTEIN US2M"/>
    <property type="match status" value="1"/>
</dbReference>
<dbReference type="Pfam" id="PF00318">
    <property type="entry name" value="Ribosomal_S2"/>
    <property type="match status" value="1"/>
</dbReference>
<dbReference type="PRINTS" id="PR00395">
    <property type="entry name" value="RIBOSOMALS2"/>
</dbReference>
<dbReference type="SUPFAM" id="SSF52313">
    <property type="entry name" value="Ribosomal protein S2"/>
    <property type="match status" value="1"/>
</dbReference>
<dbReference type="PROSITE" id="PS00962">
    <property type="entry name" value="RIBOSOMAL_S2_1"/>
    <property type="match status" value="1"/>
</dbReference>
<dbReference type="PROSITE" id="PS00963">
    <property type="entry name" value="RIBOSOMAL_S2_2"/>
    <property type="match status" value="1"/>
</dbReference>
<evidence type="ECO:0000305" key="1"/>
<gene>
    <name type="primary">rps2</name>
</gene>
<geneLocation type="chloroplast"/>
<reference key="1">
    <citation type="journal article" date="2008" name="J. Mol. Evol.">
        <title>Complete sequence of the Duckweed (Lemna minor) chloroplast genome: structural organization and phylogenetic relationships to other angiosperms.</title>
        <authorList>
            <person name="Mardanov A.V."/>
            <person name="Ravin N.V."/>
            <person name="Kuznetsov B.B."/>
            <person name="Samigullin T.H."/>
            <person name="Antonov A.S."/>
            <person name="Kolganova T.V."/>
            <person name="Skyabin K.G."/>
        </authorList>
    </citation>
    <scope>NUCLEOTIDE SEQUENCE [LARGE SCALE GENOMIC DNA]</scope>
</reference>
<protein>
    <recommendedName>
        <fullName evidence="1">Small ribosomal subunit protein uS2c</fullName>
    </recommendedName>
    <alternativeName>
        <fullName>30S ribosomal protein S2, chloroplastic</fullName>
    </alternativeName>
</protein>
<feature type="chain" id="PRO_0000352125" description="Small ribosomal subunit protein uS2c">
    <location>
        <begin position="1"/>
        <end position="236"/>
    </location>
</feature>
<proteinExistence type="inferred from homology"/>
<organism>
    <name type="scientific">Lemna minor</name>
    <name type="common">Common duckweed</name>
    <dbReference type="NCBI Taxonomy" id="4472"/>
    <lineage>
        <taxon>Eukaryota</taxon>
        <taxon>Viridiplantae</taxon>
        <taxon>Streptophyta</taxon>
        <taxon>Embryophyta</taxon>
        <taxon>Tracheophyta</taxon>
        <taxon>Spermatophyta</taxon>
        <taxon>Magnoliopsida</taxon>
        <taxon>Liliopsida</taxon>
        <taxon>Araceae</taxon>
        <taxon>Lemnoideae</taxon>
        <taxon>Lemna</taxon>
    </lineage>
</organism>
<comment type="subcellular location">
    <subcellularLocation>
        <location>Plastid</location>
        <location>Chloroplast</location>
    </subcellularLocation>
</comment>
<comment type="similarity">
    <text evidence="1">Belongs to the universal ribosomal protein uS2 family.</text>
</comment>
<name>RR2_LEMMI</name>
<sequence length="236" mass="26555">MTRRYWNINLEEMLEAGVHFGHGTRKWNPRMAPFISAKRKGIHITNLTRTARFLSEACDLVFDAASKGKHFLIVGTKNKAADLVASAAIKARCHFVNKKWLGGMLTNWSTTETRLQKFRDLRAEQRMGKLNSLPKRDAAMLKRQLSTLQTYLGGIKYMTGLPDIVIIVDQQEEYTALRECVILGIPTICLIDTNCDPDIADISIPANDDAIASIRLILNKLVSAIIDGRSSYIRNH</sequence>
<keyword id="KW-0150">Chloroplast</keyword>
<keyword id="KW-0934">Plastid</keyword>
<keyword id="KW-0687">Ribonucleoprotein</keyword>
<keyword id="KW-0689">Ribosomal protein</keyword>